<reference key="1">
    <citation type="journal article" date="2004" name="Nature">
        <title>Genome evolution in yeasts.</title>
        <authorList>
            <person name="Dujon B."/>
            <person name="Sherman D."/>
            <person name="Fischer G."/>
            <person name="Durrens P."/>
            <person name="Casaregola S."/>
            <person name="Lafontaine I."/>
            <person name="de Montigny J."/>
            <person name="Marck C."/>
            <person name="Neuveglise C."/>
            <person name="Talla E."/>
            <person name="Goffard N."/>
            <person name="Frangeul L."/>
            <person name="Aigle M."/>
            <person name="Anthouard V."/>
            <person name="Babour A."/>
            <person name="Barbe V."/>
            <person name="Barnay S."/>
            <person name="Blanchin S."/>
            <person name="Beckerich J.-M."/>
            <person name="Beyne E."/>
            <person name="Bleykasten C."/>
            <person name="Boisrame A."/>
            <person name="Boyer J."/>
            <person name="Cattolico L."/>
            <person name="Confanioleri F."/>
            <person name="de Daruvar A."/>
            <person name="Despons L."/>
            <person name="Fabre E."/>
            <person name="Fairhead C."/>
            <person name="Ferry-Dumazet H."/>
            <person name="Groppi A."/>
            <person name="Hantraye F."/>
            <person name="Hennequin C."/>
            <person name="Jauniaux N."/>
            <person name="Joyet P."/>
            <person name="Kachouri R."/>
            <person name="Kerrest A."/>
            <person name="Koszul R."/>
            <person name="Lemaire M."/>
            <person name="Lesur I."/>
            <person name="Ma L."/>
            <person name="Muller H."/>
            <person name="Nicaud J.-M."/>
            <person name="Nikolski M."/>
            <person name="Oztas S."/>
            <person name="Ozier-Kalogeropoulos O."/>
            <person name="Pellenz S."/>
            <person name="Potier S."/>
            <person name="Richard G.-F."/>
            <person name="Straub M.-L."/>
            <person name="Suleau A."/>
            <person name="Swennen D."/>
            <person name="Tekaia F."/>
            <person name="Wesolowski-Louvel M."/>
            <person name="Westhof E."/>
            <person name="Wirth B."/>
            <person name="Zeniou-Meyer M."/>
            <person name="Zivanovic Y."/>
            <person name="Bolotin-Fukuhara M."/>
            <person name="Thierry A."/>
            <person name="Bouchier C."/>
            <person name="Caudron B."/>
            <person name="Scarpelli C."/>
            <person name="Gaillardin C."/>
            <person name="Weissenbach J."/>
            <person name="Wincker P."/>
            <person name="Souciet J.-L."/>
        </authorList>
    </citation>
    <scope>NUCLEOTIDE SEQUENCE [LARGE SCALE GENOMIC DNA]</scope>
    <source>
        <strain>ATCC 36239 / CBS 767 / BCRC 21394 / JCM 1990 / NBRC 0083 / IGC 2968</strain>
    </source>
</reference>
<proteinExistence type="inferred from homology"/>
<organism>
    <name type="scientific">Debaryomyces hansenii (strain ATCC 36239 / CBS 767 / BCRC 21394 / JCM 1990 / NBRC 0083 / IGC 2968)</name>
    <name type="common">Yeast</name>
    <name type="synonym">Torulaspora hansenii</name>
    <dbReference type="NCBI Taxonomy" id="284592"/>
    <lineage>
        <taxon>Eukaryota</taxon>
        <taxon>Fungi</taxon>
        <taxon>Dikarya</taxon>
        <taxon>Ascomycota</taxon>
        <taxon>Saccharomycotina</taxon>
        <taxon>Pichiomycetes</taxon>
        <taxon>Debaryomycetaceae</taxon>
        <taxon>Debaryomyces</taxon>
    </lineage>
</organism>
<protein>
    <recommendedName>
        <fullName>Protein transport protein SEC9</fullName>
    </recommendedName>
</protein>
<accession>Q6BKU3</accession>
<gene>
    <name type="primary">SEC9</name>
    <name type="ordered locus">DEHA2F19162g</name>
</gene>
<name>SEC9_DEBHA</name>
<keyword id="KW-0175">Coiled coil</keyword>
<keyword id="KW-0653">Protein transport</keyword>
<keyword id="KW-1185">Reference proteome</keyword>
<keyword id="KW-0677">Repeat</keyword>
<keyword id="KW-0813">Transport</keyword>
<sequence length="490" mass="54596">MGIKKMFKKKDPTEGEIRDELTQIGVTTKSDNKTRQEKFGAFKNYAQDRQNAKPGFQPVNPYANVNAGNGNGNPYAQQEAGGDGDGEAMGGNNSSPYDKTTNPYGSRSERANNPYGNGNVGASSRGERAGGRNTQTNPYGGARASGRASGSKPNPYGGVQNDGALADDTESINTAVTGYADPYGNETARASRQSTRRPRAYDEESLDLNAIPSHQAYTPSKPIKRTQMRDDETLDLNDLPEEEDLNLDVDELPEQEQVDSEDDEVEAIKQDIRFIKQESVGSTRNTLRMAQEADASATNTLGMMGSQSERLYNAESNLLLADTQSKIADQKVKDLKRYNRSIFVPAYGNPFNKKSRLRQQEMQIKADKAQEKYLRDTNRKEMYASEQRIKQGISQNATSSDVHQKYRSERDLEAAQRYQFENDSEDDEMEKELANNLDQIGLYSKKLQSSAKTMGNEVDSQNKRLGQIEEDADRLDINVHMNSARLNNIR</sequence>
<comment type="similarity">
    <text evidence="3">Belongs to the SNAP-25 family.</text>
</comment>
<feature type="chain" id="PRO_0000213609" description="Protein transport protein SEC9">
    <location>
        <begin position="1"/>
        <end position="490"/>
    </location>
</feature>
<feature type="domain" description="t-SNARE coiled-coil homology 1" evidence="1">
    <location>
        <begin position="273"/>
        <end position="335"/>
    </location>
</feature>
<feature type="domain" description="t-SNARE coiled-coil homology 2" evidence="1">
    <location>
        <begin position="427"/>
        <end position="489"/>
    </location>
</feature>
<feature type="region of interest" description="Disordered" evidence="2">
    <location>
        <begin position="1"/>
        <end position="244"/>
    </location>
</feature>
<feature type="region of interest" description="Disordered" evidence="2">
    <location>
        <begin position="389"/>
        <end position="410"/>
    </location>
</feature>
<feature type="compositionally biased region" description="Basic and acidic residues" evidence="2">
    <location>
        <begin position="9"/>
        <end position="21"/>
    </location>
</feature>
<feature type="compositionally biased region" description="Basic and acidic residues" evidence="2">
    <location>
        <begin position="30"/>
        <end position="40"/>
    </location>
</feature>
<feature type="compositionally biased region" description="Low complexity" evidence="2">
    <location>
        <begin position="58"/>
        <end position="80"/>
    </location>
</feature>
<feature type="compositionally biased region" description="Polar residues" evidence="2">
    <location>
        <begin position="94"/>
        <end position="105"/>
    </location>
</feature>
<feature type="compositionally biased region" description="Low complexity" evidence="2">
    <location>
        <begin position="140"/>
        <end position="151"/>
    </location>
</feature>
<feature type="compositionally biased region" description="Acidic residues" evidence="2">
    <location>
        <begin position="232"/>
        <end position="244"/>
    </location>
</feature>
<feature type="compositionally biased region" description="Polar residues" evidence="2">
    <location>
        <begin position="392"/>
        <end position="401"/>
    </location>
</feature>
<evidence type="ECO:0000255" key="1">
    <source>
        <dbReference type="PROSITE-ProRule" id="PRU00202"/>
    </source>
</evidence>
<evidence type="ECO:0000256" key="2">
    <source>
        <dbReference type="SAM" id="MobiDB-lite"/>
    </source>
</evidence>
<evidence type="ECO:0000305" key="3"/>
<dbReference type="EMBL" id="CR382138">
    <property type="protein sequence ID" value="CAG89563.2"/>
    <property type="molecule type" value="Genomic_DNA"/>
</dbReference>
<dbReference type="RefSeq" id="XP_461178.2">
    <property type="nucleotide sequence ID" value="XM_461178.1"/>
</dbReference>
<dbReference type="SMR" id="Q6BKU3"/>
<dbReference type="FunCoup" id="Q6BKU3">
    <property type="interactions" value="81"/>
</dbReference>
<dbReference type="STRING" id="284592.Q6BKU3"/>
<dbReference type="GeneID" id="2903747"/>
<dbReference type="KEGG" id="dha:DEHA2F19162g"/>
<dbReference type="VEuPathDB" id="FungiDB:DEHA2F19162g"/>
<dbReference type="eggNOG" id="KOG3065">
    <property type="taxonomic scope" value="Eukaryota"/>
</dbReference>
<dbReference type="HOGENOM" id="CLU_020823_1_0_1"/>
<dbReference type="InParanoid" id="Q6BKU3"/>
<dbReference type="OMA" id="LDINVHM"/>
<dbReference type="OrthoDB" id="18679at2759"/>
<dbReference type="Proteomes" id="UP000000599">
    <property type="component" value="Chromosome F"/>
</dbReference>
<dbReference type="GO" id="GO:0005886">
    <property type="term" value="C:plasma membrane"/>
    <property type="evidence" value="ECO:0007669"/>
    <property type="project" value="TreeGrafter"/>
</dbReference>
<dbReference type="GO" id="GO:0031201">
    <property type="term" value="C:SNARE complex"/>
    <property type="evidence" value="ECO:0007669"/>
    <property type="project" value="TreeGrafter"/>
</dbReference>
<dbReference type="GO" id="GO:0005484">
    <property type="term" value="F:SNAP receptor activity"/>
    <property type="evidence" value="ECO:0007669"/>
    <property type="project" value="TreeGrafter"/>
</dbReference>
<dbReference type="GO" id="GO:0019905">
    <property type="term" value="F:syntaxin binding"/>
    <property type="evidence" value="ECO:0007669"/>
    <property type="project" value="TreeGrafter"/>
</dbReference>
<dbReference type="GO" id="GO:0006887">
    <property type="term" value="P:exocytosis"/>
    <property type="evidence" value="ECO:0007669"/>
    <property type="project" value="TreeGrafter"/>
</dbReference>
<dbReference type="GO" id="GO:0015031">
    <property type="term" value="P:protein transport"/>
    <property type="evidence" value="ECO:0007669"/>
    <property type="project" value="UniProtKB-KW"/>
</dbReference>
<dbReference type="GO" id="GO:0006906">
    <property type="term" value="P:vesicle fusion"/>
    <property type="evidence" value="ECO:0007669"/>
    <property type="project" value="TreeGrafter"/>
</dbReference>
<dbReference type="CDD" id="cd15857">
    <property type="entry name" value="SNARE_SEC9C"/>
    <property type="match status" value="1"/>
</dbReference>
<dbReference type="CDD" id="cd15886">
    <property type="entry name" value="SNARE_SEC9N"/>
    <property type="match status" value="1"/>
</dbReference>
<dbReference type="Gene3D" id="1.20.5.110">
    <property type="match status" value="2"/>
</dbReference>
<dbReference type="InterPro" id="IPR000727">
    <property type="entry name" value="T_SNARE_dom"/>
</dbReference>
<dbReference type="PANTHER" id="PTHR19305">
    <property type="entry name" value="SYNAPTOSOMAL ASSOCIATED PROTEIN"/>
    <property type="match status" value="1"/>
</dbReference>
<dbReference type="PANTHER" id="PTHR19305:SF9">
    <property type="entry name" value="SYNAPTOSOMAL-ASSOCIATED PROTEIN 29"/>
    <property type="match status" value="1"/>
</dbReference>
<dbReference type="SMART" id="SM00397">
    <property type="entry name" value="t_SNARE"/>
    <property type="match status" value="2"/>
</dbReference>
<dbReference type="SUPFAM" id="SSF58038">
    <property type="entry name" value="SNARE fusion complex"/>
    <property type="match status" value="2"/>
</dbReference>
<dbReference type="PROSITE" id="PS50192">
    <property type="entry name" value="T_SNARE"/>
    <property type="match status" value="1"/>
</dbReference>